<gene>
    <name type="primary">Col1a2</name>
    <name type="synonym">Cola2</name>
</gene>
<comment type="function">
    <text>Type I collagen is a member of group I collagen (fibrillar forming collagen).</text>
</comment>
<comment type="subunit">
    <text evidence="3">Trimers of one alpha 2(I) and two alpha 1(I) chains. Interacts (via C-terminus) with TMEM131 (via PapD-L domain); the interaction is direct and is involved in assembly and TRAPPIII ER-to-Golgi transport complex-dependent secretion of collagen.</text>
</comment>
<comment type="subcellular location">
    <subcellularLocation>
        <location evidence="6">Secreted</location>
        <location evidence="6">Extracellular space</location>
        <location evidence="6">Extracellular matrix</location>
    </subcellularLocation>
</comment>
<comment type="tissue specificity">
    <text evidence="8">Expressed in kidney glomeruli.</text>
</comment>
<comment type="domain">
    <text evidence="1">The C-terminal propeptide, also known as COLFI domain, have crucial roles in tissue growth and repair by controlling both the intracellular assembly of procollagen molecules and the extracellular assembly of collagen fibrils. It binds a calcium ion which is essential for its function.</text>
</comment>
<comment type="PTM">
    <text>Prolines at the third position of the tripeptide repeating unit (G-X-Y) are hydroxylated in some or all of the chains.</text>
</comment>
<comment type="similarity">
    <text evidence="6">Belongs to the fibrillar collagen family.</text>
</comment>
<sequence>MLSFVDTRTLLLLAVTSCLATCQYLQSGSVRKGPTGDRGPRGQRGPAGPRGRDGVDGPMGPPGPPGSPGPPGSPAPPGLTGNFAAQYSDKGVSSGPGPMGLMGPRGPPGAVGAPGPQGFQGPAGEPGEPGQTGPAGPRGPAGSPGKAGEDGHPGKPGRPGERGVVGPQGARGFPGTPGLPGFKGVKGHSGMDGLKGQPGAQGVKGEPGAPGENGTPGQAGARGLPGERGRVGAPGPAGARGSDGSVGPVGPAGPIGSAGPPGFPGAPGPKGELGPVGNPGPAGPAGPRGEVGLPGLSGPVGPPGNPGTNGLTGAKGATGLPGVAGAPGLPGPRGIPGPAGAAGATGARGLVGEPGPAGSKGESGNKGEPGSVGAQGPPGPSGEEGKRGSPGEAGSAGPAGPPGLRGSPGSRGLPGADGRAGVMGPPGNRGSTGPAGIRGPNGDAGRPGEPGLMGPRGLPGSPGNVGPSGKEGPVGLPGIDGRPGPIGPAGPRGEAGNIGFPGPKGPSGDPGKPGERGHPGLAGARGAPGPDGNNGAQGPPGPQGVQGGKGEQGPAGPPGFQGLPGPSGTTGEVGKPGERGLPGEFGLPGPAGPRGERGTPGESGAAGPSGPIGSRGPSGAPGPDGNKGEAGAVGAPGSAGASGPGGLPGERGAAGIPGGKGEKGETGLRGDTGNTGRDGARGIPGAVGAPGPAGASGDRGEAGAAGPSGPAGPRGSPGERGEVGPAGPNGFAGPAGAAGQPGAKGEKGTKGPKGENGIVGPTGSVGAAGPSGPNGPPGPVGSRGDGGPPGMTGFPGAAGRTGPPGPSGIAGPPGPPGAAGKEGIRGPRGDQGPVGRTGETGASGPPGFVGEKGPSGEPGTAGAPGTAGPQGLLGAPGILGLPGSRGERGLPGIAGALGEPGPLGISGPPGARGPPGAVGSPGVNGAPGEAGRDGNPGSDGPPGRDGQPGHKGERGYPGSIGPTGAAGAPGPHGSVGPAGKHGNRGEPGPAGSVGPVGAVGPRGPSGPQGIRGDKGEPGDKGHRGLPGLKGYSGLQGLPGLAGLHGDQGAPGPVGPAGPRGPAGPSGPVGKDGRSGQPGPVGPAGVRGSQGSQGPAGPPGPPGPPGPPGVSGGGYDFGFEGDFYRADQPRSQPSLRPKDYEVDATLKSLNNQIETLLTPEGSRKNPARTCRDLRLSHPEWNSDYYWIDPNQGCTMDAIKVYCDFSTGETCIQAQPVNTPAKNSYSRAQANKHVWLGETINGGSQFEYNVEGVSSKEMATQLAFMRLLANRASQNITYHCKNSIAYLDEETGSLNKAVLLQGSNDVELVAEGNSRFTYSVLVDGCSKKTNEWGKTIIEYKTNKPSRLPFLDIAPLDIGGADQEFRVEVGPVCFK</sequence>
<dbReference type="EMBL" id="X58251">
    <property type="protein sequence ID" value="CAA41205.1"/>
    <property type="molecule type" value="mRNA"/>
</dbReference>
<dbReference type="EMBL" id="BC007158">
    <property type="protein sequence ID" value="AAH07158.1"/>
    <property type="molecule type" value="mRNA"/>
</dbReference>
<dbReference type="EMBL" id="BC042503">
    <property type="protein sequence ID" value="AAH42503.2"/>
    <property type="molecule type" value="mRNA"/>
</dbReference>
<dbReference type="EMBL" id="K01832">
    <property type="protein sequence ID" value="AAA37331.1"/>
    <property type="molecule type" value="Genomic_DNA"/>
</dbReference>
<dbReference type="CCDS" id="CCDS39420.1"/>
<dbReference type="PIR" id="A43291">
    <property type="entry name" value="A43291"/>
</dbReference>
<dbReference type="RefSeq" id="NP_031769.2">
    <property type="nucleotide sequence ID" value="NM_007743.3"/>
</dbReference>
<dbReference type="SMR" id="Q01149"/>
<dbReference type="BioGRID" id="198832">
    <property type="interactions" value="12"/>
</dbReference>
<dbReference type="ComplexPortal" id="CPX-2956">
    <property type="entry name" value="Collagen type I trimer"/>
</dbReference>
<dbReference type="FunCoup" id="Q01149">
    <property type="interactions" value="508"/>
</dbReference>
<dbReference type="STRING" id="10090.ENSMUSP00000031668"/>
<dbReference type="GlyCosmos" id="Q01149">
    <property type="glycosylation" value="2 sites, No reported glycans"/>
</dbReference>
<dbReference type="GlyGen" id="Q01149">
    <property type="glycosylation" value="8 sites, 1 N-linked glycan (1 site), 1 O-linked glycan (1 site)"/>
</dbReference>
<dbReference type="iPTMnet" id="Q01149"/>
<dbReference type="PhosphoSitePlus" id="Q01149"/>
<dbReference type="SwissPalm" id="Q01149"/>
<dbReference type="CPTAC" id="non-CPTAC-3310"/>
<dbReference type="jPOST" id="Q01149"/>
<dbReference type="PaxDb" id="10090-ENSMUSP00000031668"/>
<dbReference type="PeptideAtlas" id="Q01149"/>
<dbReference type="ProteomicsDB" id="279128"/>
<dbReference type="Pumba" id="Q01149"/>
<dbReference type="Antibodypedia" id="15754">
    <property type="antibodies" value="451 antibodies from 35 providers"/>
</dbReference>
<dbReference type="DNASU" id="12843"/>
<dbReference type="Ensembl" id="ENSMUST00000031668.10">
    <property type="protein sequence ID" value="ENSMUSP00000031668.9"/>
    <property type="gene ID" value="ENSMUSG00000029661.17"/>
</dbReference>
<dbReference type="GeneID" id="12843"/>
<dbReference type="KEGG" id="mmu:12843"/>
<dbReference type="UCSC" id="uc009avm.1">
    <property type="organism name" value="mouse"/>
</dbReference>
<dbReference type="AGR" id="MGI:88468"/>
<dbReference type="CTD" id="1278"/>
<dbReference type="MGI" id="MGI:88468">
    <property type="gene designation" value="Col1a2"/>
</dbReference>
<dbReference type="VEuPathDB" id="HostDB:ENSMUSG00000029661"/>
<dbReference type="eggNOG" id="KOG3544">
    <property type="taxonomic scope" value="Eukaryota"/>
</dbReference>
<dbReference type="GeneTree" id="ENSGT00940000155639"/>
<dbReference type="HOGENOM" id="CLU_001074_2_3_1"/>
<dbReference type="InParanoid" id="Q01149"/>
<dbReference type="OMA" id="SFYWIDP"/>
<dbReference type="OrthoDB" id="8939548at2759"/>
<dbReference type="PhylomeDB" id="Q01149"/>
<dbReference type="TreeFam" id="TF344135"/>
<dbReference type="Reactome" id="R-MMU-114604">
    <property type="pathway name" value="GPVI-mediated activation cascade"/>
</dbReference>
<dbReference type="Reactome" id="R-MMU-1442490">
    <property type="pathway name" value="Collagen degradation"/>
</dbReference>
<dbReference type="Reactome" id="R-MMU-1474244">
    <property type="pathway name" value="Extracellular matrix organization"/>
</dbReference>
<dbReference type="Reactome" id="R-MMU-1650814">
    <property type="pathway name" value="Collagen biosynthesis and modifying enzymes"/>
</dbReference>
<dbReference type="Reactome" id="R-MMU-198933">
    <property type="pathway name" value="Immunoregulatory interactions between a Lymphoid and a non-Lymphoid cell"/>
</dbReference>
<dbReference type="Reactome" id="R-MMU-2022090">
    <property type="pathway name" value="Assembly of collagen fibrils and other multimeric structures"/>
</dbReference>
<dbReference type="Reactome" id="R-MMU-202733">
    <property type="pathway name" value="Cell surface interactions at the vascular wall"/>
</dbReference>
<dbReference type="Reactome" id="R-MMU-216083">
    <property type="pathway name" value="Integrin cell surface interactions"/>
</dbReference>
<dbReference type="Reactome" id="R-MMU-2243919">
    <property type="pathway name" value="Crosslinking of collagen fibrils"/>
</dbReference>
<dbReference type="Reactome" id="R-MMU-3000171">
    <property type="pathway name" value="Non-integrin membrane-ECM interactions"/>
</dbReference>
<dbReference type="Reactome" id="R-MMU-3000178">
    <property type="pathway name" value="ECM proteoglycans"/>
</dbReference>
<dbReference type="Reactome" id="R-MMU-430116">
    <property type="pathway name" value="GP1b-IX-V activation signalling"/>
</dbReference>
<dbReference type="Reactome" id="R-MMU-75892">
    <property type="pathway name" value="Platelet Adhesion to exposed collagen"/>
</dbReference>
<dbReference type="Reactome" id="R-MMU-76009">
    <property type="pathway name" value="Platelet Aggregation (Plug Formation)"/>
</dbReference>
<dbReference type="Reactome" id="R-MMU-8874081">
    <property type="pathway name" value="MET activates PTK2 signaling"/>
</dbReference>
<dbReference type="Reactome" id="R-MMU-8948216">
    <property type="pathway name" value="Collagen chain trimerization"/>
</dbReference>
<dbReference type="BioGRID-ORCS" id="12843">
    <property type="hits" value="3 hits in 79 CRISPR screens"/>
</dbReference>
<dbReference type="ChiTaRS" id="Col1a2">
    <property type="organism name" value="mouse"/>
</dbReference>
<dbReference type="PRO" id="PR:Q01149"/>
<dbReference type="Proteomes" id="UP000000589">
    <property type="component" value="Chromosome 6"/>
</dbReference>
<dbReference type="RNAct" id="Q01149">
    <property type="molecule type" value="protein"/>
</dbReference>
<dbReference type="Bgee" id="ENSMUSG00000029661">
    <property type="expression patterns" value="Expressed in vault of skull and 265 other cell types or tissues"/>
</dbReference>
<dbReference type="ExpressionAtlas" id="Q01149">
    <property type="expression patterns" value="baseline and differential"/>
</dbReference>
<dbReference type="GO" id="GO:0005581">
    <property type="term" value="C:collagen trimer"/>
    <property type="evidence" value="ECO:0000314"/>
    <property type="project" value="MGI"/>
</dbReference>
<dbReference type="GO" id="GO:0005584">
    <property type="term" value="C:collagen type I trimer"/>
    <property type="evidence" value="ECO:0000314"/>
    <property type="project" value="MGI"/>
</dbReference>
<dbReference type="GO" id="GO:0062023">
    <property type="term" value="C:collagen-containing extracellular matrix"/>
    <property type="evidence" value="ECO:0007005"/>
    <property type="project" value="UniProtKB"/>
</dbReference>
<dbReference type="GO" id="GO:0005615">
    <property type="term" value="C:extracellular space"/>
    <property type="evidence" value="ECO:0000314"/>
    <property type="project" value="MGI"/>
</dbReference>
<dbReference type="GO" id="GO:0005201">
    <property type="term" value="F:extracellular matrix structural constituent"/>
    <property type="evidence" value="ECO:0007669"/>
    <property type="project" value="InterPro"/>
</dbReference>
<dbReference type="GO" id="GO:0042802">
    <property type="term" value="F:identical protein binding"/>
    <property type="evidence" value="ECO:0007669"/>
    <property type="project" value="Ensembl"/>
</dbReference>
<dbReference type="GO" id="GO:0046872">
    <property type="term" value="F:metal ion binding"/>
    <property type="evidence" value="ECO:0007669"/>
    <property type="project" value="UniProtKB-KW"/>
</dbReference>
<dbReference type="GO" id="GO:0048407">
    <property type="term" value="F:platelet-derived growth factor binding"/>
    <property type="evidence" value="ECO:0000266"/>
    <property type="project" value="MGI"/>
</dbReference>
<dbReference type="GO" id="GO:0002020">
    <property type="term" value="F:protease binding"/>
    <property type="evidence" value="ECO:0007669"/>
    <property type="project" value="Ensembl"/>
</dbReference>
<dbReference type="GO" id="GO:0030674">
    <property type="term" value="F:protein-macromolecule adaptor activity"/>
    <property type="evidence" value="ECO:0007669"/>
    <property type="project" value="Ensembl"/>
</dbReference>
<dbReference type="GO" id="GO:0046332">
    <property type="term" value="F:SMAD binding"/>
    <property type="evidence" value="ECO:0000353"/>
    <property type="project" value="MGI"/>
</dbReference>
<dbReference type="GO" id="GO:0001568">
    <property type="term" value="P:blood vessel development"/>
    <property type="evidence" value="ECO:0007669"/>
    <property type="project" value="Ensembl"/>
</dbReference>
<dbReference type="GO" id="GO:0030282">
    <property type="term" value="P:bone mineralization"/>
    <property type="evidence" value="ECO:0000315"/>
    <property type="project" value="MGI"/>
</dbReference>
<dbReference type="GO" id="GO:0071230">
    <property type="term" value="P:cellular response to amino acid stimulus"/>
    <property type="evidence" value="ECO:0000314"/>
    <property type="project" value="MGI"/>
</dbReference>
<dbReference type="GO" id="GO:0030199">
    <property type="term" value="P:collagen fibril organization"/>
    <property type="evidence" value="ECO:0000303"/>
    <property type="project" value="ComplexPortal"/>
</dbReference>
<dbReference type="GO" id="GO:0032963">
    <property type="term" value="P:collagen metabolic process"/>
    <property type="evidence" value="ECO:0000315"/>
    <property type="project" value="MGI"/>
</dbReference>
<dbReference type="GO" id="GO:0085029">
    <property type="term" value="P:extracellular matrix assembly"/>
    <property type="evidence" value="ECO:0000315"/>
    <property type="project" value="MGI"/>
</dbReference>
<dbReference type="GO" id="GO:0070208">
    <property type="term" value="P:protein heterotrimerization"/>
    <property type="evidence" value="ECO:0000314"/>
    <property type="project" value="MGI"/>
</dbReference>
<dbReference type="GO" id="GO:0008217">
    <property type="term" value="P:regulation of blood pressure"/>
    <property type="evidence" value="ECO:0007669"/>
    <property type="project" value="Ensembl"/>
</dbReference>
<dbReference type="GO" id="GO:0007266">
    <property type="term" value="P:Rho protein signal transduction"/>
    <property type="evidence" value="ECO:0007669"/>
    <property type="project" value="Ensembl"/>
</dbReference>
<dbReference type="GO" id="GO:0001501">
    <property type="term" value="P:skeletal system development"/>
    <property type="evidence" value="ECO:0007669"/>
    <property type="project" value="Ensembl"/>
</dbReference>
<dbReference type="GO" id="GO:0043589">
    <property type="term" value="P:skin morphogenesis"/>
    <property type="evidence" value="ECO:0007669"/>
    <property type="project" value="Ensembl"/>
</dbReference>
<dbReference type="GO" id="GO:0007179">
    <property type="term" value="P:transforming growth factor beta receptor signaling pathway"/>
    <property type="evidence" value="ECO:0007669"/>
    <property type="project" value="Ensembl"/>
</dbReference>
<dbReference type="FunFam" id="2.60.120.1000:FF:000001">
    <property type="entry name" value="Collagen alpha-1 type I chain"/>
    <property type="match status" value="1"/>
</dbReference>
<dbReference type="Gene3D" id="2.60.120.1000">
    <property type="match status" value="1"/>
</dbReference>
<dbReference type="InterPro" id="IPR008160">
    <property type="entry name" value="Collagen"/>
</dbReference>
<dbReference type="InterPro" id="IPR050149">
    <property type="entry name" value="Collagen_superfamily"/>
</dbReference>
<dbReference type="InterPro" id="IPR000885">
    <property type="entry name" value="Fib_collagen_C"/>
</dbReference>
<dbReference type="PANTHER" id="PTHR24023">
    <property type="entry name" value="COLLAGEN ALPHA"/>
    <property type="match status" value="1"/>
</dbReference>
<dbReference type="PANTHER" id="PTHR24023:SF1082">
    <property type="entry name" value="COLLAGEN TRIPLE HELIX REPEAT"/>
    <property type="match status" value="1"/>
</dbReference>
<dbReference type="Pfam" id="PF01410">
    <property type="entry name" value="COLFI"/>
    <property type="match status" value="1"/>
</dbReference>
<dbReference type="Pfam" id="PF01391">
    <property type="entry name" value="Collagen"/>
    <property type="match status" value="4"/>
</dbReference>
<dbReference type="SMART" id="SM00038">
    <property type="entry name" value="COLFI"/>
    <property type="match status" value="1"/>
</dbReference>
<dbReference type="PROSITE" id="PS51461">
    <property type="entry name" value="NC1_FIB"/>
    <property type="match status" value="1"/>
</dbReference>
<name>CO1A2_MOUSE</name>
<accession>Q01149</accession>
<accession>Q8CGA5</accession>
<organism>
    <name type="scientific">Mus musculus</name>
    <name type="common">Mouse</name>
    <dbReference type="NCBI Taxonomy" id="10090"/>
    <lineage>
        <taxon>Eukaryota</taxon>
        <taxon>Metazoa</taxon>
        <taxon>Chordata</taxon>
        <taxon>Craniata</taxon>
        <taxon>Vertebrata</taxon>
        <taxon>Euteleostomi</taxon>
        <taxon>Mammalia</taxon>
        <taxon>Eutheria</taxon>
        <taxon>Euarchontoglires</taxon>
        <taxon>Glires</taxon>
        <taxon>Rodentia</taxon>
        <taxon>Myomorpha</taxon>
        <taxon>Muroidea</taxon>
        <taxon>Muridae</taxon>
        <taxon>Murinae</taxon>
        <taxon>Mus</taxon>
        <taxon>Mus</taxon>
    </lineage>
</organism>
<keyword id="KW-0106">Calcium</keyword>
<keyword id="KW-0176">Collagen</keyword>
<keyword id="KW-1015">Disulfide bond</keyword>
<keyword id="KW-0272">Extracellular matrix</keyword>
<keyword id="KW-0325">Glycoprotein</keyword>
<keyword id="KW-0379">Hydroxylation</keyword>
<keyword id="KW-0479">Metal-binding</keyword>
<keyword id="KW-0873">Pyrrolidone carboxylic acid</keyword>
<keyword id="KW-1185">Reference proteome</keyword>
<keyword id="KW-0677">Repeat</keyword>
<keyword id="KW-0964">Secreted</keyword>
<keyword id="KW-0732">Signal</keyword>
<reference key="1">
    <citation type="journal article" date="1992" name="Genomics">
        <title>Sequence analysis of a full-length cDNA for the murine pro alpha 2(I) collagen chain: comparison of the derived primary structure with human pro alpha 2(I) collagen.</title>
        <authorList>
            <person name="Phillips C.L."/>
            <person name="Morgan A.L."/>
            <person name="Lever L.W."/>
            <person name="Wenstrup R.J."/>
        </authorList>
    </citation>
    <scope>NUCLEOTIDE SEQUENCE [MRNA]</scope>
    <source>
        <tissue>Calvaria</tissue>
    </source>
</reference>
<reference key="2">
    <citation type="journal article" date="2004" name="Genome Res.">
        <title>The status, quality, and expansion of the NIH full-length cDNA project: the Mammalian Gene Collection (MGC).</title>
        <authorList>
            <consortium name="The MGC Project Team"/>
        </authorList>
    </citation>
    <scope>NUCLEOTIDE SEQUENCE [LARGE SCALE MRNA]</scope>
    <source>
        <strain>C57BL/6J</strain>
        <tissue>Mammary gland</tissue>
    </source>
</reference>
<reference key="3">
    <citation type="journal article" date="1991" name="J. Invest. Dermatol.">
        <title>Construction of a full-length murine pro alpha 2(I) collagen cDNA by the polymerase chain reaction.</title>
        <authorList>
            <person name="Phillips C.L."/>
            <person name="Lever L.W."/>
            <person name="Pinnell S.R."/>
            <person name="Quarles L.D."/>
            <person name="Wenstrup R.J."/>
        </authorList>
    </citation>
    <scope>NUCLEOTIDE SEQUENCE [MRNA] OF 1-110</scope>
    <source>
        <tissue>Calvaria</tissue>
    </source>
</reference>
<reference key="4">
    <citation type="journal article" date="1987" name="Proc. Natl. Acad. Sci. U.S.A.">
        <title>Identification of a cell-specific transcriptional enhancer in the first intron of the mouse alpha 2 (type I) collagen gene.</title>
        <authorList>
            <person name="Rossi P."/>
            <person name="de Crombrugghe B."/>
        </authorList>
    </citation>
    <scope>NUCLEOTIDE SEQUENCE [GENOMIC DNA] OF 1-23</scope>
</reference>
<reference key="5">
    <citation type="journal article" date="2010" name="Cell">
        <title>A tissue-specific atlas of mouse protein phosphorylation and expression.</title>
        <authorList>
            <person name="Huttlin E.L."/>
            <person name="Jedrychowski M.P."/>
            <person name="Elias J.E."/>
            <person name="Goswami T."/>
            <person name="Rad R."/>
            <person name="Beausoleil S.A."/>
            <person name="Villen J."/>
            <person name="Haas W."/>
            <person name="Sowa M.E."/>
            <person name="Gygi S.P."/>
        </authorList>
    </citation>
    <scope>IDENTIFICATION BY MASS SPECTROMETRY [LARGE SCALE ANALYSIS]</scope>
    <source>
        <tissue>Brain</tissue>
        <tissue>Brown adipose tissue</tissue>
        <tissue>Heart</tissue>
        <tissue>Kidney</tissue>
        <tissue>Liver</tissue>
        <tissue>Lung</tissue>
        <tissue>Pancreas</tissue>
        <tissue>Spleen</tissue>
        <tissue>Testis</tissue>
    </source>
</reference>
<reference key="6">
    <citation type="journal article" date="2010" name="J. Biol. Chem.">
        <title>Post-transcriptional up-regulation of Tsc-22 by Ybx1, a target of miR-216a, mediates TGF-{beta}-induced collagen expression in kidney cells.</title>
        <authorList>
            <person name="Kato M."/>
            <person name="Wang L."/>
            <person name="Putta S."/>
            <person name="Wang M."/>
            <person name="Yuan H."/>
            <person name="Sun G."/>
            <person name="Lanting L."/>
            <person name="Todorov I."/>
            <person name="Rossi J.J."/>
            <person name="Natarajan R."/>
        </authorList>
    </citation>
    <scope>TISSUE SPECIFICITY</scope>
</reference>
<evidence type="ECO:0000250" key="1"/>
<evidence type="ECO:0000250" key="2">
    <source>
        <dbReference type="UniProtKB" id="P02466"/>
    </source>
</evidence>
<evidence type="ECO:0000250" key="3">
    <source>
        <dbReference type="UniProtKB" id="P08123"/>
    </source>
</evidence>
<evidence type="ECO:0000250" key="4">
    <source>
        <dbReference type="UniProtKB" id="Q03692"/>
    </source>
</evidence>
<evidence type="ECO:0000255" key="5"/>
<evidence type="ECO:0000255" key="6">
    <source>
        <dbReference type="PROSITE-ProRule" id="PRU00793"/>
    </source>
</evidence>
<evidence type="ECO:0000256" key="7">
    <source>
        <dbReference type="SAM" id="MobiDB-lite"/>
    </source>
</evidence>
<evidence type="ECO:0000269" key="8">
    <source>
    </source>
</evidence>
<evidence type="ECO:0000305" key="9"/>
<proteinExistence type="evidence at protein level"/>
<feature type="signal peptide" evidence="2">
    <location>
        <begin position="1"/>
        <end position="22"/>
    </location>
</feature>
<feature type="propeptide" id="PRO_0000005807" description="N-terminal propeptide" evidence="3">
    <location>
        <begin position="23"/>
        <end position="85"/>
    </location>
</feature>
<feature type="chain" id="PRO_0000005808" description="Collagen alpha-2(I) chain">
    <location>
        <begin position="86"/>
        <end position="1125"/>
    </location>
</feature>
<feature type="propeptide" id="PRO_0000005809" description="C-terminal propeptide" evidence="3">
    <location>
        <begin position="1126"/>
        <end position="1372"/>
    </location>
</feature>
<feature type="domain" description="Fibrillar collagen NC1" evidence="6">
    <location>
        <begin position="1139"/>
        <end position="1372"/>
    </location>
</feature>
<feature type="region of interest" description="Disordered" evidence="7">
    <location>
        <begin position="28"/>
        <end position="1135"/>
    </location>
</feature>
<feature type="compositionally biased region" description="Pro residues" evidence="7">
    <location>
        <begin position="59"/>
        <end position="77"/>
    </location>
</feature>
<feature type="compositionally biased region" description="Low complexity" evidence="7">
    <location>
        <begin position="95"/>
        <end position="146"/>
    </location>
</feature>
<feature type="compositionally biased region" description="Basic and acidic residues" evidence="7">
    <location>
        <begin position="147"/>
        <end position="161"/>
    </location>
</feature>
<feature type="compositionally biased region" description="Low complexity" evidence="7">
    <location>
        <begin position="231"/>
        <end position="260"/>
    </location>
</feature>
<feature type="compositionally biased region" description="Low complexity" evidence="7">
    <location>
        <begin position="285"/>
        <end position="299"/>
    </location>
</feature>
<feature type="compositionally biased region" description="Low complexity" evidence="7">
    <location>
        <begin position="306"/>
        <end position="327"/>
    </location>
</feature>
<feature type="compositionally biased region" description="Low complexity" evidence="7">
    <location>
        <begin position="336"/>
        <end position="351"/>
    </location>
</feature>
<feature type="compositionally biased region" description="Low complexity" evidence="7">
    <location>
        <begin position="390"/>
        <end position="416"/>
    </location>
</feature>
<feature type="compositionally biased region" description="Low complexity" evidence="7">
    <location>
        <begin position="476"/>
        <end position="495"/>
    </location>
</feature>
<feature type="compositionally biased region" description="Low complexity" evidence="7">
    <location>
        <begin position="519"/>
        <end position="537"/>
    </location>
</feature>
<feature type="compositionally biased region" description="Gly residues" evidence="7">
    <location>
        <begin position="544"/>
        <end position="553"/>
    </location>
</feature>
<feature type="compositionally biased region" description="Low complexity" evidence="7">
    <location>
        <begin position="600"/>
        <end position="639"/>
    </location>
</feature>
<feature type="compositionally biased region" description="Gly residues" evidence="7">
    <location>
        <begin position="640"/>
        <end position="649"/>
    </location>
</feature>
<feature type="compositionally biased region" description="Low complexity" evidence="7">
    <location>
        <begin position="681"/>
        <end position="716"/>
    </location>
</feature>
<feature type="compositionally biased region" description="Low complexity" evidence="7">
    <location>
        <begin position="725"/>
        <end position="743"/>
    </location>
</feature>
<feature type="compositionally biased region" description="Basic and acidic residues" evidence="7">
    <location>
        <begin position="744"/>
        <end position="753"/>
    </location>
</feature>
<feature type="compositionally biased region" description="Low complexity" evidence="7">
    <location>
        <begin position="755"/>
        <end position="771"/>
    </location>
</feature>
<feature type="compositionally biased region" description="Gly residues" evidence="7">
    <location>
        <begin position="781"/>
        <end position="790"/>
    </location>
</feature>
<feature type="compositionally biased region" description="Low complexity" evidence="7">
    <location>
        <begin position="792"/>
        <end position="801"/>
    </location>
</feature>
<feature type="compositionally biased region" description="Low complexity" evidence="7">
    <location>
        <begin position="855"/>
        <end position="882"/>
    </location>
</feature>
<feature type="compositionally biased region" description="Low complexity" evidence="7">
    <location>
        <begin position="905"/>
        <end position="927"/>
    </location>
</feature>
<feature type="compositionally biased region" description="Low complexity" evidence="7">
    <location>
        <begin position="957"/>
        <end position="978"/>
    </location>
</feature>
<feature type="compositionally biased region" description="Low complexity" evidence="7">
    <location>
        <begin position="987"/>
        <end position="1007"/>
    </location>
</feature>
<feature type="compositionally biased region" description="Basic and acidic residues" evidence="7">
    <location>
        <begin position="1011"/>
        <end position="1022"/>
    </location>
</feature>
<feature type="compositionally biased region" description="Pro residues" evidence="7">
    <location>
        <begin position="1095"/>
        <end position="1107"/>
    </location>
</feature>
<feature type="binding site" evidence="4">
    <location>
        <position position="1187"/>
    </location>
    <ligand>
        <name>Ca(2+)</name>
        <dbReference type="ChEBI" id="CHEBI:29108"/>
    </ligand>
</feature>
<feature type="binding site" evidence="4">
    <location>
        <position position="1189"/>
    </location>
    <ligand>
        <name>Ca(2+)</name>
        <dbReference type="ChEBI" id="CHEBI:29108"/>
    </ligand>
</feature>
<feature type="binding site" evidence="4">
    <location>
        <position position="1190"/>
    </location>
    <ligand>
        <name>Ca(2+)</name>
        <dbReference type="ChEBI" id="CHEBI:29108"/>
    </ligand>
</feature>
<feature type="binding site" evidence="4">
    <location>
        <position position="1192"/>
    </location>
    <ligand>
        <name>Ca(2+)</name>
        <dbReference type="ChEBI" id="CHEBI:29108"/>
    </ligand>
</feature>
<feature type="binding site" evidence="4">
    <location>
        <position position="1195"/>
    </location>
    <ligand>
        <name>Ca(2+)</name>
        <dbReference type="ChEBI" id="CHEBI:29108"/>
    </ligand>
</feature>
<feature type="modified residue" description="Pyrrolidone carboxylic acid" evidence="3">
    <location>
        <position position="23"/>
    </location>
</feature>
<feature type="modified residue" description="Allysine" evidence="3">
    <location>
        <position position="90"/>
    </location>
</feature>
<feature type="modified residue" description="5-hydroxylysine; alternate" evidence="3">
    <location>
        <position position="183"/>
    </location>
</feature>
<feature type="glycosylation site" description="O-linked (Gal...) hydroxylysine; alternate" evidence="3">
    <location>
        <position position="183"/>
    </location>
</feature>
<feature type="glycosylation site" description="N-linked (GlcNAc...) asparagine" evidence="5">
    <location>
        <position position="1273"/>
    </location>
</feature>
<feature type="disulfide bond" evidence="6">
    <location>
        <begin position="1169"/>
        <end position="1201"/>
    </location>
</feature>
<feature type="disulfide bond" evidence="6">
    <location>
        <begin position="1209"/>
        <end position="1370"/>
    </location>
</feature>
<feature type="disulfide bond" evidence="6">
    <location>
        <begin position="1278"/>
        <end position="1323"/>
    </location>
</feature>
<feature type="sequence conflict" description="In Ref. 4; AAA37331." evidence="9" ref="4">
    <original>V</original>
    <variation>A</variation>
    <location>
        <position position="15"/>
    </location>
</feature>
<feature type="sequence conflict" description="In Ref. 1; CAA41205." evidence="9" ref="1">
    <original>R</original>
    <variation>TT</variation>
    <location>
        <position position="1167"/>
    </location>
</feature>
<protein>
    <recommendedName>
        <fullName>Collagen alpha-2(I) chain</fullName>
    </recommendedName>
    <alternativeName>
        <fullName>Alpha-2 type I collagen</fullName>
    </alternativeName>
</protein>